<organism>
    <name type="scientific">Thermoplasma acidophilum (strain ATCC 25905 / DSM 1728 / JCM 9062 / NBRC 15155 / AMRC-C165)</name>
    <dbReference type="NCBI Taxonomy" id="273075"/>
    <lineage>
        <taxon>Archaea</taxon>
        <taxon>Methanobacteriati</taxon>
        <taxon>Thermoplasmatota</taxon>
        <taxon>Thermoplasmata</taxon>
        <taxon>Thermoplasmatales</taxon>
        <taxon>Thermoplasmataceae</taxon>
        <taxon>Thermoplasma</taxon>
    </lineage>
</organism>
<reference key="1">
    <citation type="journal article" date="2000" name="Nature">
        <title>The genome sequence of the thermoacidophilic scavenger Thermoplasma acidophilum.</title>
        <authorList>
            <person name="Ruepp A."/>
            <person name="Graml W."/>
            <person name="Santos-Martinez M.-L."/>
            <person name="Koretke K.K."/>
            <person name="Volker C."/>
            <person name="Mewes H.-W."/>
            <person name="Frishman D."/>
            <person name="Stocker S."/>
            <person name="Lupas A.N."/>
            <person name="Baumeister W."/>
        </authorList>
    </citation>
    <scope>NUCLEOTIDE SEQUENCE [LARGE SCALE GENOMIC DNA]</scope>
    <source>
        <strain>ATCC 25905 / DSM 1728 / JCM 9062 / NBRC 15155 / AMRC-C165</strain>
    </source>
</reference>
<accession>Q9HLK5</accession>
<protein>
    <recommendedName>
        <fullName>DNA polymerase II small subunit</fullName>
        <shortName>Pol II</shortName>
        <ecNumber>2.7.7.7</ecNumber>
    </recommendedName>
    <alternativeName>
        <fullName>Exodeoxyribonuclease small subunit</fullName>
        <ecNumber>3.1.11.1</ecNumber>
    </alternativeName>
</protein>
<feature type="chain" id="PRO_0000096182" description="DNA polymerase II small subunit">
    <location>
        <begin position="1"/>
        <end position="488"/>
    </location>
</feature>
<dbReference type="EC" id="2.7.7.7"/>
<dbReference type="EC" id="3.1.11.1"/>
<dbReference type="EMBL" id="AL445063">
    <property type="protein sequence ID" value="CAC11368.1"/>
    <property type="molecule type" value="Genomic_DNA"/>
</dbReference>
<dbReference type="SMR" id="Q9HLK5"/>
<dbReference type="STRING" id="273075.gene:9571438"/>
<dbReference type="PaxDb" id="273075-Ta0222"/>
<dbReference type="DNASU" id="1455858"/>
<dbReference type="EnsemblBacteria" id="CAC11368">
    <property type="protein sequence ID" value="CAC11368"/>
    <property type="gene ID" value="CAC11368"/>
</dbReference>
<dbReference type="KEGG" id="tac:Ta0222"/>
<dbReference type="eggNOG" id="arCOG04455">
    <property type="taxonomic scope" value="Archaea"/>
</dbReference>
<dbReference type="HOGENOM" id="CLU_027850_1_0_2"/>
<dbReference type="InParanoid" id="Q9HLK5"/>
<dbReference type="OrthoDB" id="372039at2157"/>
<dbReference type="Proteomes" id="UP000001024">
    <property type="component" value="Chromosome"/>
</dbReference>
<dbReference type="GO" id="GO:0042575">
    <property type="term" value="C:DNA polymerase complex"/>
    <property type="evidence" value="ECO:0007669"/>
    <property type="project" value="TreeGrafter"/>
</dbReference>
<dbReference type="GO" id="GO:0003677">
    <property type="term" value="F:DNA binding"/>
    <property type="evidence" value="ECO:0007669"/>
    <property type="project" value="UniProtKB-UniRule"/>
</dbReference>
<dbReference type="GO" id="GO:0003887">
    <property type="term" value="F:DNA-directed DNA polymerase activity"/>
    <property type="evidence" value="ECO:0007669"/>
    <property type="project" value="UniProtKB-UniRule"/>
</dbReference>
<dbReference type="GO" id="GO:0008310">
    <property type="term" value="F:single-stranded DNA 3'-5' DNA exonuclease activity"/>
    <property type="evidence" value="ECO:0007669"/>
    <property type="project" value="UniProtKB-EC"/>
</dbReference>
<dbReference type="GO" id="GO:0006308">
    <property type="term" value="P:DNA catabolic process"/>
    <property type="evidence" value="ECO:0007669"/>
    <property type="project" value="UniProtKB-UniRule"/>
</dbReference>
<dbReference type="GO" id="GO:0006271">
    <property type="term" value="P:DNA strand elongation involved in DNA replication"/>
    <property type="evidence" value="ECO:0007669"/>
    <property type="project" value="TreeGrafter"/>
</dbReference>
<dbReference type="CDD" id="cd07386">
    <property type="entry name" value="MPP_DNA_pol_II_small_archeal_C"/>
    <property type="match status" value="1"/>
</dbReference>
<dbReference type="CDD" id="cd04490">
    <property type="entry name" value="PolII_SU_OBF"/>
    <property type="match status" value="1"/>
</dbReference>
<dbReference type="Gene3D" id="3.60.21.50">
    <property type="match status" value="1"/>
</dbReference>
<dbReference type="HAMAP" id="MF_00325">
    <property type="entry name" value="DNApol_II_A_arch"/>
    <property type="match status" value="1"/>
</dbReference>
<dbReference type="InterPro" id="IPR007185">
    <property type="entry name" value="DNA_pol_a/d/e_bsu"/>
</dbReference>
<dbReference type="InterPro" id="IPR024826">
    <property type="entry name" value="DNA_pol_delta/II_ssu"/>
</dbReference>
<dbReference type="InterPro" id="IPR029052">
    <property type="entry name" value="Metallo-depent_PP-like"/>
</dbReference>
<dbReference type="InterPro" id="IPR011149">
    <property type="entry name" value="Pol2_small_arc"/>
</dbReference>
<dbReference type="NCBIfam" id="NF003118">
    <property type="entry name" value="PRK04036.1-3"/>
    <property type="match status" value="1"/>
</dbReference>
<dbReference type="PANTHER" id="PTHR10416">
    <property type="entry name" value="DNA POLYMERASE DELTA SUBUNIT 2"/>
    <property type="match status" value="1"/>
</dbReference>
<dbReference type="PANTHER" id="PTHR10416:SF0">
    <property type="entry name" value="DNA POLYMERASE DELTA SUBUNIT 2"/>
    <property type="match status" value="1"/>
</dbReference>
<dbReference type="Pfam" id="PF04042">
    <property type="entry name" value="DNA_pol_E_B"/>
    <property type="match status" value="1"/>
</dbReference>
<dbReference type="PIRSF" id="PIRSF000803">
    <property type="entry name" value="Arc_Pol2_small"/>
    <property type="match status" value="1"/>
</dbReference>
<dbReference type="SUPFAM" id="SSF56300">
    <property type="entry name" value="Metallo-dependent phosphatases"/>
    <property type="match status" value="1"/>
</dbReference>
<evidence type="ECO:0000250" key="1"/>
<evidence type="ECO:0000305" key="2"/>
<proteinExistence type="inferred from homology"/>
<name>DP2S_THEAC</name>
<keyword id="KW-0235">DNA replication</keyword>
<keyword id="KW-0238">DNA-binding</keyword>
<keyword id="KW-0239">DNA-directed DNA polymerase</keyword>
<keyword id="KW-0269">Exonuclease</keyword>
<keyword id="KW-0378">Hydrolase</keyword>
<keyword id="KW-0511">Multifunctional enzyme</keyword>
<keyword id="KW-0540">Nuclease</keyword>
<keyword id="KW-0548">Nucleotidyltransferase</keyword>
<keyword id="KW-1185">Reference proteome</keyword>
<keyword id="KW-0808">Transferase</keyword>
<comment type="function">
    <text evidence="1">Possesses two activities: a DNA synthesis (polymerase) and an exonucleolytic activity that degrades single-stranded DNA in the 3' to 5' direction. Has a template-primer preference which is characteristic of a replicative DNA polymerase (By similarity).</text>
</comment>
<comment type="catalytic activity">
    <reaction>
        <text>DNA(n) + a 2'-deoxyribonucleoside 5'-triphosphate = DNA(n+1) + diphosphate</text>
        <dbReference type="Rhea" id="RHEA:22508"/>
        <dbReference type="Rhea" id="RHEA-COMP:17339"/>
        <dbReference type="Rhea" id="RHEA-COMP:17340"/>
        <dbReference type="ChEBI" id="CHEBI:33019"/>
        <dbReference type="ChEBI" id="CHEBI:61560"/>
        <dbReference type="ChEBI" id="CHEBI:173112"/>
        <dbReference type="EC" id="2.7.7.7"/>
    </reaction>
</comment>
<comment type="catalytic activity">
    <reaction>
        <text>Exonucleolytic cleavage in the 3'- to 5'-direction to yield nucleoside 5'-phosphates.</text>
        <dbReference type="EC" id="3.1.11.1"/>
    </reaction>
</comment>
<comment type="subunit">
    <text evidence="1">Heterodimer of a large subunit and a small subunit.</text>
</comment>
<comment type="similarity">
    <text evidence="2">Belongs to the DNA polymerase delta/II small subunit family.</text>
</comment>
<sequence length="488" mass="55577">MVIWFFYGFRKIMHLSLKRIIVKCKMSQLDRTSLIQYFNSNGVLISPEALDKLIKYSSSSLIEDLIKNSDGYIDEKYVERYVSRPKVRNDYEVYLPDVRFNASIEDFRKMFVSKYEKLSKIITSSSSMRGSISIKTAKRSQGEVKVVGMVSEVSMTKNGHKRIVIEDLDDSITAIVMKDRGPVNEIILEDEVIGIIGSVSQSSKDPVIFVNEIIRPDIPYRVIDEEKHEPVYVASISDIHVGSKTFRKNEFEAMVRWISGSDPDASRVKYLILSGDVVDGIGVYPDQENDLEILNPLEQYANLAEYLVDVPEDVKVFVMPGNHDTVRLSEPQPVFPGKIRDLFEPNVAFLPNPYNLKLEGKNVLVYHGMSLNDMIELIPGANYDSIGKAIEAILVRRHLSPKYGGNTPMIPSAVDYHVIEEVPDIFITGHIHSHYIGNYKGVRYVNSSTWQSQTEYQKMMNFNPKPSKLTLFDLYSRSVIVKDFDTTL</sequence>
<gene>
    <name type="primary">polB</name>
    <name type="ordered locus">Ta0222</name>
</gene>